<sequence length="340" mass="37858">MEPDRTQIRLDPRYTADLLEILKTNYSVPSACFSYPPTAAQLLRALGPVDISLMVIMTLFVLGSIAIFLEAAVYLHKNTRCPIKRKTLIWCSSSPTIVSAFSCFGLWIPRALTLVEMAITTFYSMCFYLLMQAMVEGFGGKEAVLRTLKDTPVMIHTGPCCCCCPCCPRIKITRKRLQLLLLGPIQYAFFKISLTLVGLFLIPDGIFDPSDISEGSTALWINTFLGVSTLSALWTIGIIFRQARLHLGEQNIGAKFVLFQALLILSALQPSIFSVLASGGQIACSPPFSSKIRSQVMNCHLLILESFLITVLTRIYYRRKDDKLGYEPFSSPDQDLNLKA</sequence>
<protein>
    <recommendedName>
        <fullName>Organic solute transporter subunit alpha</fullName>
        <shortName>OST-alpha</shortName>
    </recommendedName>
    <alternativeName>
        <fullName>Solute carrier family 51 subunit alpha</fullName>
    </alternativeName>
</protein>
<proteinExistence type="evidence at transcript level"/>
<keyword id="KW-0025">Alternative splicing</keyword>
<keyword id="KW-1003">Cell membrane</keyword>
<keyword id="KW-0256">Endoplasmic reticulum</keyword>
<keyword id="KW-0325">Glycoprotein</keyword>
<keyword id="KW-0445">Lipid transport</keyword>
<keyword id="KW-0472">Membrane</keyword>
<keyword id="KW-0597">Phosphoprotein</keyword>
<keyword id="KW-1185">Reference proteome</keyword>
<keyword id="KW-0812">Transmembrane</keyword>
<keyword id="KW-1133">Transmembrane helix</keyword>
<keyword id="KW-0813">Transport</keyword>
<accession>Q3T124</accession>
<accession>Q56K15</accession>
<gene>
    <name type="primary">SLC51A</name>
    <name type="synonym">OSTA</name>
</gene>
<comment type="function">
    <text evidence="2 3 4">Essential component of the Ost-alpha/Ost-beta complex, a heterodimer that acts as the intestinal basolateral transporter responsible for bile acid export from enterocytes into portal blood. Efficiently transports the major species of bile acids (taurocholate) (By similarity). Taurine conjugates are transported more efficiently across the basolateral membrane than glycine-conjugated bile acids (By similarity). Can also transport steroids such as estrone 3-sulfate and dehydroepiandrosterone 3-sulfate, therefore playing a role in the enterohepatic circulation of sterols (By similarity). Able to transport eicosanoids such as prostaglandin E2 (By similarity).</text>
</comment>
<comment type="catalytic activity">
    <reaction evidence="2">
        <text>taurocholate(out) = taurocholate(in)</text>
        <dbReference type="Rhea" id="RHEA:71703"/>
        <dbReference type="ChEBI" id="CHEBI:36257"/>
    </reaction>
</comment>
<comment type="catalytic activity">
    <reaction evidence="2">
        <text>estrone 3-sulfate(out) = estrone 3-sulfate(in)</text>
        <dbReference type="Rhea" id="RHEA:71835"/>
        <dbReference type="ChEBI" id="CHEBI:60050"/>
    </reaction>
</comment>
<comment type="catalytic activity">
    <reaction evidence="2">
        <text>dehydroepiandrosterone 3-sulfate(out) = dehydroepiandrosterone 3-sulfate(in)</text>
        <dbReference type="Rhea" id="RHEA:71839"/>
        <dbReference type="ChEBI" id="CHEBI:57905"/>
    </reaction>
</comment>
<comment type="catalytic activity">
    <reaction evidence="3">
        <text>tauroursodeoxycholate(out) = tauroursodeoxycholate(in)</text>
        <dbReference type="Rhea" id="RHEA:71843"/>
        <dbReference type="ChEBI" id="CHEBI:132028"/>
    </reaction>
</comment>
<comment type="catalytic activity">
    <reaction evidence="3">
        <text>glycoursodeoxycholate(out) = glycoursodeoxycholate(in)</text>
        <dbReference type="Rhea" id="RHEA:71847"/>
        <dbReference type="ChEBI" id="CHEBI:132030"/>
    </reaction>
</comment>
<comment type="catalytic activity">
    <reaction evidence="3">
        <text>glycocholate(out) = glycocholate(in)</text>
        <dbReference type="Rhea" id="RHEA:71851"/>
        <dbReference type="ChEBI" id="CHEBI:29746"/>
    </reaction>
</comment>
<comment type="catalytic activity">
    <reaction evidence="3">
        <text>taurochenodeoxycholate(out) = taurochenodeoxycholate(in)</text>
        <dbReference type="Rhea" id="RHEA:71855"/>
        <dbReference type="ChEBI" id="CHEBI:9407"/>
    </reaction>
</comment>
<comment type="catalytic activity">
    <reaction evidence="3">
        <text>glycochenodeoxycholate(out) = glycochenodeoxycholate(in)</text>
        <dbReference type="Rhea" id="RHEA:71859"/>
        <dbReference type="ChEBI" id="CHEBI:36252"/>
    </reaction>
</comment>
<comment type="catalytic activity">
    <reaction evidence="3">
        <text>taurodeoxycholate(out) = taurodeoxycholate(in)</text>
        <dbReference type="Rhea" id="RHEA:71863"/>
        <dbReference type="ChEBI" id="CHEBI:36261"/>
    </reaction>
</comment>
<comment type="catalytic activity">
    <reaction evidence="3">
        <text>glycodeoxycholate(out) = glycodeoxycholate(in)</text>
        <dbReference type="Rhea" id="RHEA:71867"/>
        <dbReference type="ChEBI" id="CHEBI:82982"/>
    </reaction>
</comment>
<comment type="catalytic activity">
    <reaction evidence="4">
        <text>prostaglandin E2(out) = prostaglandin E2(in)</text>
        <dbReference type="Rhea" id="RHEA:50984"/>
        <dbReference type="ChEBI" id="CHEBI:606564"/>
    </reaction>
</comment>
<comment type="subunit">
    <text evidence="1">Interacts with SLC51B. The Ost-alpha/Ost-beta complex is a heterodimer composed of alpha (SLC51A) and beta (SLC51B) subunit (By similarity).</text>
</comment>
<comment type="subcellular location">
    <subcellularLocation>
        <location evidence="1">Cell membrane</location>
        <topology evidence="1">Multi-pass membrane protein</topology>
    </subcellularLocation>
    <subcellularLocation>
        <location evidence="1">Endoplasmic reticulum membrane</location>
        <topology evidence="1">Multi-pass membrane protein</topology>
    </subcellularLocation>
    <text evidence="1">Transported from the endoplasmic reticulum to the plasma membrane upon interacting with SLC51B. Mainly restricted to the lateral and basal membranes of ileal enterocytes (By similarity).</text>
</comment>
<comment type="alternative products">
    <event type="alternative splicing"/>
    <isoform>
        <id>Q3T124-1</id>
        <name>1</name>
        <sequence type="displayed"/>
    </isoform>
    <isoform>
        <id>Q3T124-2</id>
        <name>2</name>
        <sequence type="described" ref="VSP_033256"/>
    </isoform>
</comment>
<comment type="similarity">
    <text evidence="7">Belongs to the OST-alpha family.</text>
</comment>
<name>OSTA_BOVIN</name>
<feature type="chain" id="PRO_0000331542" description="Organic solute transporter subunit alpha">
    <location>
        <begin position="1"/>
        <end position="340"/>
    </location>
</feature>
<feature type="topological domain" description="Extracellular" evidence="5">
    <location>
        <begin position="1"/>
        <end position="52"/>
    </location>
</feature>
<feature type="transmembrane region" description="Helical" evidence="5">
    <location>
        <begin position="53"/>
        <end position="73"/>
    </location>
</feature>
<feature type="topological domain" description="Cytoplasmic" evidence="5">
    <location>
        <begin position="74"/>
        <end position="87"/>
    </location>
</feature>
<feature type="transmembrane region" description="Helical" evidence="5">
    <location>
        <begin position="88"/>
        <end position="108"/>
    </location>
</feature>
<feature type="topological domain" description="Extracellular" evidence="5">
    <location>
        <begin position="109"/>
        <end position="110"/>
    </location>
</feature>
<feature type="transmembrane region" description="Helical" evidence="5">
    <location>
        <begin position="111"/>
        <end position="131"/>
    </location>
</feature>
<feature type="topological domain" description="Cytoplasmic" evidence="5">
    <location>
        <begin position="132"/>
        <end position="186"/>
    </location>
</feature>
<feature type="transmembrane region" description="Helical" evidence="5">
    <location>
        <begin position="187"/>
        <end position="207"/>
    </location>
</feature>
<feature type="topological domain" description="Extracellular" evidence="5">
    <location>
        <begin position="208"/>
        <end position="219"/>
    </location>
</feature>
<feature type="transmembrane region" description="Helical" evidence="5">
    <location>
        <begin position="220"/>
        <end position="240"/>
    </location>
</feature>
<feature type="topological domain" description="Cytoplasmic" evidence="5">
    <location>
        <begin position="241"/>
        <end position="255"/>
    </location>
</feature>
<feature type="transmembrane region" description="Helical" evidence="5">
    <location>
        <begin position="256"/>
        <end position="276"/>
    </location>
</feature>
<feature type="topological domain" description="Extracellular" evidence="5">
    <location>
        <begin position="277"/>
        <end position="295"/>
    </location>
</feature>
<feature type="transmembrane region" description="Helical" evidence="5">
    <location>
        <begin position="296"/>
        <end position="316"/>
    </location>
</feature>
<feature type="topological domain" description="Cytoplasmic" evidence="5">
    <location>
        <begin position="317"/>
        <end position="340"/>
    </location>
</feature>
<feature type="modified residue" description="Phosphoserine" evidence="3">
    <location>
        <position position="330"/>
    </location>
</feature>
<feature type="glycosylation site" description="N-linked (GlcNAc...) asparagine" evidence="5">
    <location>
        <position position="25"/>
    </location>
</feature>
<feature type="splice variant" id="VSP_033256" description="In isoform 2." evidence="6">
    <location>
        <begin position="45"/>
        <end position="65"/>
    </location>
</feature>
<dbReference type="EMBL" id="AY911312">
    <property type="protein sequence ID" value="AAW82080.1"/>
    <property type="molecule type" value="mRNA"/>
</dbReference>
<dbReference type="EMBL" id="BC102154">
    <property type="protein sequence ID" value="AAI02155.1"/>
    <property type="molecule type" value="mRNA"/>
</dbReference>
<dbReference type="RefSeq" id="NP_001020504.1">
    <molecule id="Q3T124-2"/>
    <property type="nucleotide sequence ID" value="NM_001025333.2"/>
</dbReference>
<dbReference type="RefSeq" id="XP_005201455.1">
    <molecule id="Q3T124-1"/>
    <property type="nucleotide sequence ID" value="XM_005201398.5"/>
</dbReference>
<dbReference type="SMR" id="Q3T124"/>
<dbReference type="FunCoup" id="Q3T124">
    <property type="interactions" value="40"/>
</dbReference>
<dbReference type="STRING" id="9913.ENSBTAP00000016384"/>
<dbReference type="GlyCosmos" id="Q3T124">
    <property type="glycosylation" value="1 site, No reported glycans"/>
</dbReference>
<dbReference type="GlyGen" id="Q3T124">
    <property type="glycosylation" value="1 site"/>
</dbReference>
<dbReference type="PaxDb" id="9913-ENSBTAP00000016384"/>
<dbReference type="GeneID" id="516626"/>
<dbReference type="KEGG" id="bta:516626"/>
<dbReference type="CTD" id="200931"/>
<dbReference type="VEuPathDB" id="HostDB:ENSBTAG00000012347"/>
<dbReference type="eggNOG" id="ENOG502R3BX">
    <property type="taxonomic scope" value="Eukaryota"/>
</dbReference>
<dbReference type="HOGENOM" id="CLU_054316_0_0_1"/>
<dbReference type="InParanoid" id="Q3T124"/>
<dbReference type="OMA" id="CLPMVIP"/>
<dbReference type="OrthoDB" id="5832279at2759"/>
<dbReference type="TreeFam" id="TF316050"/>
<dbReference type="Reactome" id="R-BTA-159418">
    <property type="pathway name" value="Recycling of bile acids and salts"/>
</dbReference>
<dbReference type="Proteomes" id="UP000009136">
    <property type="component" value="Chromosome 1"/>
</dbReference>
<dbReference type="Bgee" id="ENSBTAG00000012347">
    <property type="expression patterns" value="Expressed in cortex of kidney and 34 other cell types or tissues"/>
</dbReference>
<dbReference type="GO" id="GO:0016323">
    <property type="term" value="C:basolateral plasma membrane"/>
    <property type="evidence" value="ECO:0007669"/>
    <property type="project" value="Ensembl"/>
</dbReference>
<dbReference type="GO" id="GO:0005789">
    <property type="term" value="C:endoplasmic reticulum membrane"/>
    <property type="evidence" value="ECO:0000250"/>
    <property type="project" value="UniProtKB"/>
</dbReference>
<dbReference type="GO" id="GO:0016020">
    <property type="term" value="C:membrane"/>
    <property type="evidence" value="ECO:0000250"/>
    <property type="project" value="UniProtKB"/>
</dbReference>
<dbReference type="GO" id="GO:0005886">
    <property type="term" value="C:plasma membrane"/>
    <property type="evidence" value="ECO:0000250"/>
    <property type="project" value="UniProtKB"/>
</dbReference>
<dbReference type="GO" id="GO:0032991">
    <property type="term" value="C:protein-containing complex"/>
    <property type="evidence" value="ECO:0000250"/>
    <property type="project" value="UniProtKB"/>
</dbReference>
<dbReference type="GO" id="GO:0015125">
    <property type="term" value="F:bile acid transmembrane transporter activity"/>
    <property type="evidence" value="ECO:0007669"/>
    <property type="project" value="Ensembl"/>
</dbReference>
<dbReference type="GO" id="GO:0046982">
    <property type="term" value="F:protein heterodimerization activity"/>
    <property type="evidence" value="ECO:0000250"/>
    <property type="project" value="UniProtKB"/>
</dbReference>
<dbReference type="GO" id="GO:0042803">
    <property type="term" value="F:protein homodimerization activity"/>
    <property type="evidence" value="ECO:0000250"/>
    <property type="project" value="UniProtKB"/>
</dbReference>
<dbReference type="GO" id="GO:0022857">
    <property type="term" value="F:transmembrane transporter activity"/>
    <property type="evidence" value="ECO:0000318"/>
    <property type="project" value="GO_Central"/>
</dbReference>
<dbReference type="GO" id="GO:0015721">
    <property type="term" value="P:bile acid and bile salt transport"/>
    <property type="evidence" value="ECO:0000250"/>
    <property type="project" value="UniProtKB"/>
</dbReference>
<dbReference type="GO" id="GO:0032782">
    <property type="term" value="P:bile acid secretion"/>
    <property type="evidence" value="ECO:0007669"/>
    <property type="project" value="Ensembl"/>
</dbReference>
<dbReference type="InterPro" id="IPR005178">
    <property type="entry name" value="Ostalpha/TMEM184C"/>
</dbReference>
<dbReference type="PANTHER" id="PTHR23423">
    <property type="entry name" value="ORGANIC SOLUTE TRANSPORTER-RELATED"/>
    <property type="match status" value="1"/>
</dbReference>
<dbReference type="Pfam" id="PF03619">
    <property type="entry name" value="Solute_trans_a"/>
    <property type="match status" value="1"/>
</dbReference>
<dbReference type="SMART" id="SM01417">
    <property type="entry name" value="Solute_trans_a"/>
    <property type="match status" value="1"/>
</dbReference>
<evidence type="ECO:0000250" key="1"/>
<evidence type="ECO:0000250" key="2">
    <source>
        <dbReference type="UniProtKB" id="Q86UW1"/>
    </source>
</evidence>
<evidence type="ECO:0000250" key="3">
    <source>
        <dbReference type="UniProtKB" id="Q8R000"/>
    </source>
</evidence>
<evidence type="ECO:0000250" key="4">
    <source>
        <dbReference type="UniProtKB" id="Q90YM5"/>
    </source>
</evidence>
<evidence type="ECO:0000255" key="5"/>
<evidence type="ECO:0000303" key="6">
    <source ref="1"/>
</evidence>
<evidence type="ECO:0000305" key="7"/>
<reference key="1">
    <citation type="submission" date="2005-01" db="EMBL/GenBank/DDBJ databases">
        <title>Analysis of sequences obtained from constructed full-length bovine cDNA libraries.</title>
        <authorList>
            <person name="Yu J."/>
            <person name="Meng Y."/>
            <person name="Wang Z."/>
            <person name="Hansen C."/>
            <person name="Li C."/>
            <person name="Moore S.S."/>
        </authorList>
    </citation>
    <scope>NUCLEOTIDE SEQUENCE [LARGE SCALE MRNA] (ISOFORM 2)</scope>
    <source>
        <tissue>Lymphoid epithelium</tissue>
    </source>
</reference>
<reference key="2">
    <citation type="submission" date="2005-08" db="EMBL/GenBank/DDBJ databases">
        <authorList>
            <consortium name="NIH - Mammalian Gene Collection (MGC) project"/>
        </authorList>
    </citation>
    <scope>NUCLEOTIDE SEQUENCE [LARGE SCALE MRNA] (ISOFORM 1)</scope>
    <source>
        <strain>Crossbred X Angus</strain>
        <tissue>Ileum</tissue>
    </source>
</reference>
<organism>
    <name type="scientific">Bos taurus</name>
    <name type="common">Bovine</name>
    <dbReference type="NCBI Taxonomy" id="9913"/>
    <lineage>
        <taxon>Eukaryota</taxon>
        <taxon>Metazoa</taxon>
        <taxon>Chordata</taxon>
        <taxon>Craniata</taxon>
        <taxon>Vertebrata</taxon>
        <taxon>Euteleostomi</taxon>
        <taxon>Mammalia</taxon>
        <taxon>Eutheria</taxon>
        <taxon>Laurasiatheria</taxon>
        <taxon>Artiodactyla</taxon>
        <taxon>Ruminantia</taxon>
        <taxon>Pecora</taxon>
        <taxon>Bovidae</taxon>
        <taxon>Bovinae</taxon>
        <taxon>Bos</taxon>
    </lineage>
</organism>